<protein>
    <recommendedName>
        <fullName evidence="1">4-hydroxy-tetrahydrodipicolinate reductase</fullName>
        <shortName evidence="1">HTPA reductase</shortName>
        <ecNumber evidence="1">1.17.1.8</ecNumber>
    </recommendedName>
</protein>
<keyword id="KW-0028">Amino-acid biosynthesis</keyword>
<keyword id="KW-0963">Cytoplasm</keyword>
<keyword id="KW-0220">Diaminopimelate biosynthesis</keyword>
<keyword id="KW-0457">Lysine biosynthesis</keyword>
<keyword id="KW-0520">NAD</keyword>
<keyword id="KW-0521">NADP</keyword>
<keyword id="KW-0560">Oxidoreductase</keyword>
<accession>B5BL41</accession>
<organism>
    <name type="scientific">Salmonella paratyphi A (strain AKU_12601)</name>
    <dbReference type="NCBI Taxonomy" id="554290"/>
    <lineage>
        <taxon>Bacteria</taxon>
        <taxon>Pseudomonadati</taxon>
        <taxon>Pseudomonadota</taxon>
        <taxon>Gammaproteobacteria</taxon>
        <taxon>Enterobacterales</taxon>
        <taxon>Enterobacteriaceae</taxon>
        <taxon>Salmonella</taxon>
    </lineage>
</organism>
<feature type="chain" id="PRO_1000094000" description="4-hydroxy-tetrahydrodipicolinate reductase">
    <location>
        <begin position="1"/>
        <end position="273"/>
    </location>
</feature>
<feature type="active site" description="Proton donor/acceptor" evidence="1">
    <location>
        <position position="159"/>
    </location>
</feature>
<feature type="active site" description="Proton donor" evidence="1">
    <location>
        <position position="163"/>
    </location>
</feature>
<feature type="binding site" evidence="1">
    <location>
        <begin position="12"/>
        <end position="17"/>
    </location>
    <ligand>
        <name>NAD(+)</name>
        <dbReference type="ChEBI" id="CHEBI:57540"/>
    </ligand>
</feature>
<feature type="binding site" evidence="1">
    <location>
        <position position="38"/>
    </location>
    <ligand>
        <name>NAD(+)</name>
        <dbReference type="ChEBI" id="CHEBI:57540"/>
    </ligand>
</feature>
<feature type="binding site" evidence="1">
    <location>
        <position position="39"/>
    </location>
    <ligand>
        <name>NADP(+)</name>
        <dbReference type="ChEBI" id="CHEBI:58349"/>
    </ligand>
</feature>
<feature type="binding site" evidence="1">
    <location>
        <begin position="102"/>
        <end position="104"/>
    </location>
    <ligand>
        <name>NAD(+)</name>
        <dbReference type="ChEBI" id="CHEBI:57540"/>
    </ligand>
</feature>
<feature type="binding site" evidence="1">
    <location>
        <begin position="126"/>
        <end position="129"/>
    </location>
    <ligand>
        <name>NAD(+)</name>
        <dbReference type="ChEBI" id="CHEBI:57540"/>
    </ligand>
</feature>
<feature type="binding site" evidence="1">
    <location>
        <position position="160"/>
    </location>
    <ligand>
        <name>(S)-2,3,4,5-tetrahydrodipicolinate</name>
        <dbReference type="ChEBI" id="CHEBI:16845"/>
    </ligand>
</feature>
<feature type="binding site" evidence="1">
    <location>
        <begin position="169"/>
        <end position="170"/>
    </location>
    <ligand>
        <name>(S)-2,3,4,5-tetrahydrodipicolinate</name>
        <dbReference type="ChEBI" id="CHEBI:16845"/>
    </ligand>
</feature>
<comment type="function">
    <text evidence="1">Catalyzes the conversion of 4-hydroxy-tetrahydrodipicolinate (HTPA) to tetrahydrodipicolinate.</text>
</comment>
<comment type="catalytic activity">
    <reaction evidence="1">
        <text>(S)-2,3,4,5-tetrahydrodipicolinate + NAD(+) + H2O = (2S,4S)-4-hydroxy-2,3,4,5-tetrahydrodipicolinate + NADH + H(+)</text>
        <dbReference type="Rhea" id="RHEA:35323"/>
        <dbReference type="ChEBI" id="CHEBI:15377"/>
        <dbReference type="ChEBI" id="CHEBI:15378"/>
        <dbReference type="ChEBI" id="CHEBI:16845"/>
        <dbReference type="ChEBI" id="CHEBI:57540"/>
        <dbReference type="ChEBI" id="CHEBI:57945"/>
        <dbReference type="ChEBI" id="CHEBI:67139"/>
        <dbReference type="EC" id="1.17.1.8"/>
    </reaction>
</comment>
<comment type="catalytic activity">
    <reaction evidence="1">
        <text>(S)-2,3,4,5-tetrahydrodipicolinate + NADP(+) + H2O = (2S,4S)-4-hydroxy-2,3,4,5-tetrahydrodipicolinate + NADPH + H(+)</text>
        <dbReference type="Rhea" id="RHEA:35331"/>
        <dbReference type="ChEBI" id="CHEBI:15377"/>
        <dbReference type="ChEBI" id="CHEBI:15378"/>
        <dbReference type="ChEBI" id="CHEBI:16845"/>
        <dbReference type="ChEBI" id="CHEBI:57783"/>
        <dbReference type="ChEBI" id="CHEBI:58349"/>
        <dbReference type="ChEBI" id="CHEBI:67139"/>
        <dbReference type="EC" id="1.17.1.8"/>
    </reaction>
</comment>
<comment type="pathway">
    <text evidence="1">Amino-acid biosynthesis; L-lysine biosynthesis via DAP pathway; (S)-tetrahydrodipicolinate from L-aspartate: step 4/4.</text>
</comment>
<comment type="subunit">
    <text evidence="1">Homotetramer.</text>
</comment>
<comment type="subcellular location">
    <subcellularLocation>
        <location evidence="1">Cytoplasm</location>
    </subcellularLocation>
</comment>
<comment type="similarity">
    <text evidence="1">Belongs to the DapB family.</text>
</comment>
<comment type="caution">
    <text evidence="2">Was originally thought to be a dihydrodipicolinate reductase (DHDPR), catalyzing the conversion of dihydrodipicolinate to tetrahydrodipicolinate. However, it was shown in E.coli that the substrate of the enzymatic reaction is not dihydrodipicolinate (DHDP) but in fact (2S,4S)-4-hydroxy-2,3,4,5-tetrahydrodipicolinic acid (HTPA), the product released by the DapA-catalyzed reaction.</text>
</comment>
<name>DAPB_SALPK</name>
<evidence type="ECO:0000255" key="1">
    <source>
        <dbReference type="HAMAP-Rule" id="MF_00102"/>
    </source>
</evidence>
<evidence type="ECO:0000305" key="2"/>
<proteinExistence type="inferred from homology"/>
<reference key="1">
    <citation type="journal article" date="2009" name="BMC Genomics">
        <title>Pseudogene accumulation in the evolutionary histories of Salmonella enterica serovars Paratyphi A and Typhi.</title>
        <authorList>
            <person name="Holt K.E."/>
            <person name="Thomson N.R."/>
            <person name="Wain J."/>
            <person name="Langridge G.C."/>
            <person name="Hasan R."/>
            <person name="Bhutta Z.A."/>
            <person name="Quail M.A."/>
            <person name="Norbertczak H."/>
            <person name="Walker D."/>
            <person name="Simmonds M."/>
            <person name="White B."/>
            <person name="Bason N."/>
            <person name="Mungall K."/>
            <person name="Dougan G."/>
            <person name="Parkhill J."/>
        </authorList>
    </citation>
    <scope>NUCLEOTIDE SEQUENCE [LARGE SCALE GENOMIC DNA]</scope>
    <source>
        <strain>AKU_12601</strain>
    </source>
</reference>
<gene>
    <name evidence="1" type="primary">dapB</name>
    <name type="ordered locus">SSPA0062</name>
</gene>
<dbReference type="EC" id="1.17.1.8" evidence="1"/>
<dbReference type="EMBL" id="FM200053">
    <property type="protein sequence ID" value="CAR58172.1"/>
    <property type="molecule type" value="Genomic_DNA"/>
</dbReference>
<dbReference type="RefSeq" id="WP_000544033.1">
    <property type="nucleotide sequence ID" value="NC_011147.1"/>
</dbReference>
<dbReference type="SMR" id="B5BL41"/>
<dbReference type="KEGG" id="sek:SSPA0062"/>
<dbReference type="HOGENOM" id="CLU_047479_2_1_6"/>
<dbReference type="UniPathway" id="UPA00034">
    <property type="reaction ID" value="UER00018"/>
</dbReference>
<dbReference type="Proteomes" id="UP000001869">
    <property type="component" value="Chromosome"/>
</dbReference>
<dbReference type="GO" id="GO:0005829">
    <property type="term" value="C:cytosol"/>
    <property type="evidence" value="ECO:0007669"/>
    <property type="project" value="TreeGrafter"/>
</dbReference>
<dbReference type="GO" id="GO:0008839">
    <property type="term" value="F:4-hydroxy-tetrahydrodipicolinate reductase"/>
    <property type="evidence" value="ECO:0007669"/>
    <property type="project" value="UniProtKB-EC"/>
</dbReference>
<dbReference type="GO" id="GO:0051287">
    <property type="term" value="F:NAD binding"/>
    <property type="evidence" value="ECO:0007669"/>
    <property type="project" value="UniProtKB-UniRule"/>
</dbReference>
<dbReference type="GO" id="GO:0050661">
    <property type="term" value="F:NADP binding"/>
    <property type="evidence" value="ECO:0007669"/>
    <property type="project" value="UniProtKB-UniRule"/>
</dbReference>
<dbReference type="GO" id="GO:0016726">
    <property type="term" value="F:oxidoreductase activity, acting on CH or CH2 groups, NAD or NADP as acceptor"/>
    <property type="evidence" value="ECO:0007669"/>
    <property type="project" value="UniProtKB-UniRule"/>
</dbReference>
<dbReference type="GO" id="GO:0019877">
    <property type="term" value="P:diaminopimelate biosynthetic process"/>
    <property type="evidence" value="ECO:0007669"/>
    <property type="project" value="UniProtKB-UniRule"/>
</dbReference>
<dbReference type="GO" id="GO:0009089">
    <property type="term" value="P:lysine biosynthetic process via diaminopimelate"/>
    <property type="evidence" value="ECO:0007669"/>
    <property type="project" value="UniProtKB-UniRule"/>
</dbReference>
<dbReference type="CDD" id="cd02274">
    <property type="entry name" value="DHDPR_N"/>
    <property type="match status" value="1"/>
</dbReference>
<dbReference type="FunFam" id="3.30.360.10:FF:000004">
    <property type="entry name" value="4-hydroxy-tetrahydrodipicolinate reductase"/>
    <property type="match status" value="1"/>
</dbReference>
<dbReference type="FunFam" id="3.40.50.720:FF:000048">
    <property type="entry name" value="4-hydroxy-tetrahydrodipicolinate reductase"/>
    <property type="match status" value="1"/>
</dbReference>
<dbReference type="Gene3D" id="3.30.360.10">
    <property type="entry name" value="Dihydrodipicolinate Reductase, domain 2"/>
    <property type="match status" value="1"/>
</dbReference>
<dbReference type="Gene3D" id="3.40.50.720">
    <property type="entry name" value="NAD(P)-binding Rossmann-like Domain"/>
    <property type="match status" value="1"/>
</dbReference>
<dbReference type="HAMAP" id="MF_00102">
    <property type="entry name" value="DapB"/>
    <property type="match status" value="1"/>
</dbReference>
<dbReference type="InterPro" id="IPR022663">
    <property type="entry name" value="DapB_C"/>
</dbReference>
<dbReference type="InterPro" id="IPR000846">
    <property type="entry name" value="DapB_N"/>
</dbReference>
<dbReference type="InterPro" id="IPR022664">
    <property type="entry name" value="DapB_N_CS"/>
</dbReference>
<dbReference type="InterPro" id="IPR023940">
    <property type="entry name" value="DHDPR_bac"/>
</dbReference>
<dbReference type="InterPro" id="IPR036291">
    <property type="entry name" value="NAD(P)-bd_dom_sf"/>
</dbReference>
<dbReference type="NCBIfam" id="TIGR00036">
    <property type="entry name" value="dapB"/>
    <property type="match status" value="1"/>
</dbReference>
<dbReference type="PANTHER" id="PTHR20836:SF0">
    <property type="entry name" value="4-HYDROXY-TETRAHYDRODIPICOLINATE REDUCTASE 1, CHLOROPLASTIC-RELATED"/>
    <property type="match status" value="1"/>
</dbReference>
<dbReference type="PANTHER" id="PTHR20836">
    <property type="entry name" value="DIHYDRODIPICOLINATE REDUCTASE"/>
    <property type="match status" value="1"/>
</dbReference>
<dbReference type="Pfam" id="PF05173">
    <property type="entry name" value="DapB_C"/>
    <property type="match status" value="1"/>
</dbReference>
<dbReference type="Pfam" id="PF01113">
    <property type="entry name" value="DapB_N"/>
    <property type="match status" value="1"/>
</dbReference>
<dbReference type="PIRSF" id="PIRSF000161">
    <property type="entry name" value="DHPR"/>
    <property type="match status" value="1"/>
</dbReference>
<dbReference type="SUPFAM" id="SSF55347">
    <property type="entry name" value="Glyceraldehyde-3-phosphate dehydrogenase-like, C-terminal domain"/>
    <property type="match status" value="1"/>
</dbReference>
<dbReference type="SUPFAM" id="SSF51735">
    <property type="entry name" value="NAD(P)-binding Rossmann-fold domains"/>
    <property type="match status" value="1"/>
</dbReference>
<dbReference type="PROSITE" id="PS01298">
    <property type="entry name" value="DAPB"/>
    <property type="match status" value="1"/>
</dbReference>
<sequence length="273" mass="28967">MHEAQIRVAIAGAGGRMGRQLIQAAMAMEGVQLGAALEREGSSLLGSDAGELAGAGKSGVIVQSSLEAVKDDFDVFIDFTRPEGTLTHLAFCRQHGKGMVIGTTGFDDAGKQAIREASQEIAIVFAANFSVGVNVMLKLLEKAAKVMGYYSDIEIIEAHHRHKVDAPSGTALEMGEAIAGALDKNLKDCAVYSREGYTGERVPGTIGFATVRAGDIVGEHTAMFADIGERVEITHKASSRMTFANGALRAALWLKTKKNGLFDMRDVLGLDVL</sequence>